<evidence type="ECO:0000250" key="1">
    <source>
        <dbReference type="UniProtKB" id="P22337"/>
    </source>
</evidence>
<evidence type="ECO:0000255" key="2"/>
<evidence type="ECO:0000269" key="3">
    <source>
    </source>
</evidence>
<evidence type="ECO:0000269" key="4">
    <source>
    </source>
</evidence>
<evidence type="ECO:0000303" key="5">
    <source>
    </source>
</evidence>
<evidence type="ECO:0000305" key="6"/>
<evidence type="ECO:0000312" key="7">
    <source>
        <dbReference type="EMBL" id="AAA82160.1"/>
    </source>
</evidence>
<evidence type="ECO:0007829" key="8">
    <source>
        <dbReference type="PDB" id="7PP7"/>
    </source>
</evidence>
<name>PALAD_THUAT</name>
<proteinExistence type="evidence at protein level"/>
<reference key="1">
    <citation type="journal article" date="1994" name="J. Biol. Chem.">
        <title>delta 6 Hexadecenoic acid is synthesized by the activity of a soluble delta 6 palmitoyl-acyl carrier protein desaturase in Thunbergia alata endosperm.</title>
        <authorList>
            <person name="Cahoon E.B."/>
            <person name="Cranmer A.M."/>
            <person name="Shanklin J."/>
            <person name="Ohlrogge J.B."/>
        </authorList>
    </citation>
    <scope>NUCLEOTIDE SEQUENCE [MRNA]</scope>
    <scope>CATALYTIC ACTIVITY</scope>
    <scope>FUNCTION</scope>
    <scope>SUBSTRATE SPECIFICITY</scope>
    <scope>ACTIVITY REGULATION</scope>
    <source>
        <tissue>Endosperm</tissue>
    </source>
</reference>
<reference key="2">
    <citation type="journal article" date="1997" name="Proc. Natl. Acad. Sci. U.S.A.">
        <title>Redesign of soluble fatty acid desaturases from plants for altered substrate specificity and double bond position.</title>
        <authorList>
            <person name="Cahoon E.B."/>
            <person name="Lindqvist Y."/>
            <person name="Schneider G."/>
            <person name="Shanklin J."/>
        </authorList>
    </citation>
    <scope>3D-STRUCTURE MODELING</scope>
    <scope>MUTAGENESIS OF ALA-207; ALA-214; TYR-215; ALA-226; SER-231; LEU-232 AND GLY-233</scope>
    <scope>CATALYTIC ACTIVITY</scope>
</reference>
<accession>Q41510</accession>
<dbReference type="EC" id="1.14.19.26" evidence="3 4"/>
<dbReference type="EMBL" id="U09269">
    <property type="protein sequence ID" value="AAA82160.1"/>
    <property type="molecule type" value="mRNA"/>
</dbReference>
<dbReference type="PDB" id="7PP7">
    <property type="method" value="X-ray"/>
    <property type="resolution" value="2.05 A"/>
    <property type="chains" value="A=44-387"/>
</dbReference>
<dbReference type="PDBsum" id="7PP7"/>
<dbReference type="SMR" id="Q41510"/>
<dbReference type="BioCyc" id="MetaCyc:MONOMER-12584"/>
<dbReference type="BRENDA" id="1.14.19.26">
    <property type="organism ID" value="6365"/>
</dbReference>
<dbReference type="UniPathway" id="UPA00199"/>
<dbReference type="GO" id="GO:0009570">
    <property type="term" value="C:chloroplast stroma"/>
    <property type="evidence" value="ECO:0007669"/>
    <property type="project" value="TreeGrafter"/>
</dbReference>
<dbReference type="GO" id="GO:0046872">
    <property type="term" value="F:metal ion binding"/>
    <property type="evidence" value="ECO:0007669"/>
    <property type="project" value="UniProtKB-KW"/>
</dbReference>
<dbReference type="GO" id="GO:0045300">
    <property type="term" value="F:stearoyl-[ACP] desaturase activity"/>
    <property type="evidence" value="ECO:0007669"/>
    <property type="project" value="InterPro"/>
</dbReference>
<dbReference type="GO" id="GO:0006633">
    <property type="term" value="P:fatty acid biosynthetic process"/>
    <property type="evidence" value="ECO:0007669"/>
    <property type="project" value="UniProtKB-KW"/>
</dbReference>
<dbReference type="CDD" id="cd01050">
    <property type="entry name" value="Acyl_ACP_Desat"/>
    <property type="match status" value="1"/>
</dbReference>
<dbReference type="FunFam" id="1.10.620.20:FF:000002">
    <property type="entry name" value="Stearoyl-[acyl-carrier-protein] 9-desaturase, chloroplastic"/>
    <property type="match status" value="1"/>
</dbReference>
<dbReference type="Gene3D" id="1.10.620.20">
    <property type="entry name" value="Ribonucleotide Reductase, subunit A"/>
    <property type="match status" value="1"/>
</dbReference>
<dbReference type="InterPro" id="IPR005067">
    <property type="entry name" value="Fatty_acid_desaturase-2"/>
</dbReference>
<dbReference type="InterPro" id="IPR009078">
    <property type="entry name" value="Ferritin-like_SF"/>
</dbReference>
<dbReference type="InterPro" id="IPR012348">
    <property type="entry name" value="RNR-like"/>
</dbReference>
<dbReference type="PANTHER" id="PTHR31155">
    <property type="entry name" value="ACYL- ACYL-CARRIER-PROTEIN DESATURASE-RELATED"/>
    <property type="match status" value="1"/>
</dbReference>
<dbReference type="PANTHER" id="PTHR31155:SF27">
    <property type="entry name" value="STEAROYL-[ACYL-CARRIER-PROTEIN] 9-DESATURASE 5, CHLOROPLASTIC"/>
    <property type="match status" value="1"/>
</dbReference>
<dbReference type="Pfam" id="PF03405">
    <property type="entry name" value="FA_desaturase_2"/>
    <property type="match status" value="1"/>
</dbReference>
<dbReference type="PIRSF" id="PIRSF000346">
    <property type="entry name" value="Dlt9_acylACP_des"/>
    <property type="match status" value="1"/>
</dbReference>
<dbReference type="SUPFAM" id="SSF47240">
    <property type="entry name" value="Ferritin-like"/>
    <property type="match status" value="1"/>
</dbReference>
<protein>
    <recommendedName>
        <fullName evidence="6">Acyl-[acyl-carrier-protein] 6-desaturase</fullName>
        <ecNumber evidence="3 4">1.14.19.26</ecNumber>
    </recommendedName>
    <alternativeName>
        <fullName evidence="5">Palmitoyl-acyl carrier protein desaturase</fullName>
    </alternativeName>
</protein>
<keyword id="KW-0002">3D-structure</keyword>
<keyword id="KW-0150">Chloroplast</keyword>
<keyword id="KW-0275">Fatty acid biosynthesis</keyword>
<keyword id="KW-0276">Fatty acid metabolism</keyword>
<keyword id="KW-0408">Iron</keyword>
<keyword id="KW-0444">Lipid biosynthesis</keyword>
<keyword id="KW-0443">Lipid metabolism</keyword>
<keyword id="KW-0479">Metal-binding</keyword>
<keyword id="KW-0560">Oxidoreductase</keyword>
<keyword id="KW-0934">Plastid</keyword>
<keyword id="KW-0809">Transit peptide</keyword>
<sequence length="387" mass="43868">MALVFKSIGAHKTPPCTLNLASPALYHTRVTMASTITHPPPLKDRKISSTRRVRTYPLAPEKAEIFNSMHGWVEDTILPFLKPVEESWQPTDFLPDSTSDGFHEQVEELRKRTADLPDDYLVALVGAMVTEEALPTYQTMLNTTDVIYDESGASPVPWAVWTRAWTAEENRHGDIVNKYLYLSGRVDMKQIEKTIQYLIGSGMDPGADNNPYLAYIYTSYQERATAISHGSLGRLARQKGEMKLAQICGTISADEKRHEAAYSKIVEKLFELDPEGTMLALAYMMKMKIVMPARLMHDGKDPDMFQHFSAVSQRLGIYTAKEYTDILEHMIARWGVDKLTGLSGEGRRAQDYVCGLPMRFRKVEERAQAWAENISHVPFSWIFGRRV</sequence>
<comment type="function">
    <text evidence="3 4">Delta(6) fatty acid desaturase introducing a cis double bond at carbon 6 of palmitoyl-[acyl-carrier protein](16:0-ACP), producing 16:1(6Z)-ACP (PubMed:7961667, PubMed:9144157). No activity with the coenzyme A ester of the fatty acid (PubMed:7961667). The position of the double bond is determined by its distance from the carboxyl end of the fatty acid (PubMed:7961667). Low activity with several saturated acyl-[acyl-carrier protein]s, including 14:0-ACP and 18:0-ACP (PubMed:7961667, PubMed:9144157). Requires reduced ferredoxin for detectable in vitro activity (PubMed:7961667).</text>
</comment>
<comment type="catalytic activity">
    <reaction evidence="3 4">
        <text>hexadecanoyl-[ACP] + 2 reduced [2Fe-2S]-[ferredoxin] + O2 + 2 H(+) = (6Z)-hexadecenoyl-[ACP] + 2 oxidized [2Fe-2S]-[ferredoxin] + 2 H2O</text>
        <dbReference type="Rhea" id="RHEA:46416"/>
        <dbReference type="Rhea" id="RHEA-COMP:9652"/>
        <dbReference type="Rhea" id="RHEA-COMP:10000"/>
        <dbReference type="Rhea" id="RHEA-COMP:10001"/>
        <dbReference type="Rhea" id="RHEA-COMP:11556"/>
        <dbReference type="ChEBI" id="CHEBI:15377"/>
        <dbReference type="ChEBI" id="CHEBI:15378"/>
        <dbReference type="ChEBI" id="CHEBI:15379"/>
        <dbReference type="ChEBI" id="CHEBI:33737"/>
        <dbReference type="ChEBI" id="CHEBI:33738"/>
        <dbReference type="ChEBI" id="CHEBI:78483"/>
        <dbReference type="ChEBI" id="CHEBI:86110"/>
        <dbReference type="EC" id="1.14.19.26"/>
    </reaction>
</comment>
<comment type="cofactor">
    <cofactor evidence="1">
        <name>Fe(2+)</name>
        <dbReference type="ChEBI" id="CHEBI:29033"/>
    </cofactor>
    <text evidence="1">Binds 2 Fe(2+) ions per subunit.</text>
</comment>
<comment type="activity regulation">
    <text evidence="3">Inhibited by KCN or H(2)O(2).</text>
</comment>
<comment type="pathway">
    <text>Lipid metabolism; fatty acid metabolism.</text>
</comment>
<comment type="subcellular location">
    <subcellularLocation>
        <location evidence="2">Plastid</location>
        <location evidence="2">Chloroplast</location>
    </subcellularLocation>
</comment>
<comment type="similarity">
    <text evidence="6">Belongs to the fatty acid desaturase type 2 family.</text>
</comment>
<organism evidence="7">
    <name type="scientific">Thunbergia alata</name>
    <name type="common">Black-eyed Susan vine</name>
    <dbReference type="NCBI Taxonomy" id="32198"/>
    <lineage>
        <taxon>Eukaryota</taxon>
        <taxon>Viridiplantae</taxon>
        <taxon>Streptophyta</taxon>
        <taxon>Embryophyta</taxon>
        <taxon>Tracheophyta</taxon>
        <taxon>Spermatophyta</taxon>
        <taxon>Magnoliopsida</taxon>
        <taxon>eudicotyledons</taxon>
        <taxon>Gunneridae</taxon>
        <taxon>Pentapetalae</taxon>
        <taxon>asterids</taxon>
        <taxon>lamiids</taxon>
        <taxon>Lamiales</taxon>
        <taxon>Acanthaceae</taxon>
        <taxon>Thunbergioideae</taxon>
        <taxon>Thunbergia</taxon>
    </lineage>
</organism>
<feature type="transit peptide" description="Chloroplast" evidence="2">
    <location>
        <begin position="1"/>
        <end position="29"/>
    </location>
</feature>
<feature type="chain" id="PRO_0000434767" description="Acyl-[acyl-carrier-protein] 6-desaturase">
    <location>
        <begin position="30"/>
        <end position="387"/>
    </location>
</feature>
<feature type="binding site" evidence="1">
    <location>
        <position position="131"/>
    </location>
    <ligand>
        <name>Fe cation</name>
        <dbReference type="ChEBI" id="CHEBI:24875"/>
        <label>1</label>
    </ligand>
</feature>
<feature type="binding site" evidence="1">
    <location>
        <position position="169"/>
    </location>
    <ligand>
        <name>Fe cation</name>
        <dbReference type="ChEBI" id="CHEBI:24875"/>
        <label>1</label>
    </ligand>
</feature>
<feature type="binding site" evidence="1">
    <location>
        <position position="169"/>
    </location>
    <ligand>
        <name>Fe cation</name>
        <dbReference type="ChEBI" id="CHEBI:24875"/>
        <label>2</label>
    </ligand>
</feature>
<feature type="binding site" evidence="1">
    <location>
        <position position="172"/>
    </location>
    <ligand>
        <name>Fe cation</name>
        <dbReference type="ChEBI" id="CHEBI:24875"/>
        <label>1</label>
    </ligand>
</feature>
<feature type="binding site" evidence="1">
    <location>
        <position position="222"/>
    </location>
    <ligand>
        <name>Fe cation</name>
        <dbReference type="ChEBI" id="CHEBI:24875"/>
        <label>2</label>
    </ligand>
</feature>
<feature type="binding site" evidence="1">
    <location>
        <position position="255"/>
    </location>
    <ligand>
        <name>Fe cation</name>
        <dbReference type="ChEBI" id="CHEBI:24875"/>
        <label>1</label>
    </ligand>
</feature>
<feature type="binding site" evidence="1">
    <location>
        <position position="255"/>
    </location>
    <ligand>
        <name>Fe cation</name>
        <dbReference type="ChEBI" id="CHEBI:24875"/>
        <label>2</label>
    </ligand>
</feature>
<feature type="binding site" evidence="1">
    <location>
        <position position="258"/>
    </location>
    <ligand>
        <name>Fe cation</name>
        <dbReference type="ChEBI" id="CHEBI:24875"/>
        <label>2</label>
    </ligand>
</feature>
<feature type="mutagenesis site" description="Catalytic activity converted to a delta(9)-18:0-ACP desaturase; when associated with F-226; N-231; T-232 and A-233. Catalyzes both delta(9) desaturation of 18:0-ACP and delta(6) desaturation of 16:0-ACP; when associated with F-226. Gain of a delta(9) desaturase activity with both 18:0-ACP and 16:0-ACP; when associated with F-226; N-231; T-232 and A-233." evidence="4">
    <original>A</original>
    <variation>T</variation>
    <location>
        <position position="207"/>
    </location>
</feature>
<feature type="mutagenesis site" description="Broadened fatty acid chain-length specificity; when associated with F-215." evidence="4">
    <original>A</original>
    <variation>G</variation>
    <location>
        <position position="214"/>
    </location>
</feature>
<feature type="mutagenesis site" description="Broadened fatty acid chain-length specificity; when associated with G-214." evidence="4">
    <original>Y</original>
    <variation>F</variation>
    <location>
        <position position="215"/>
    </location>
</feature>
<feature type="mutagenesis site" description="Catalytic activity converted to a delta(9)-18:0-ACP desaturase; when associated with T-207; N-231; T-232 and A-233. Catalyzes both delta(9) desaturation of 18:0-ACP and delta(6) desaturation of 16:0-ACP; when associated with T-207. Gain of a delta(9) desaturase activity with both 18:0-ACP and 16:0-ACP; when associated with T-207; N-231; T-232 and A-233." evidence="4">
    <original>A</original>
    <variation>F</variation>
    <location>
        <position position="226"/>
    </location>
</feature>
<feature type="mutagenesis site" description="Catalytic activity converted to a delta(9)-18:0-ACP desaturase; when associated with T-207; F-226; T-232 and A-233. Gain of a delta(9) desaturase activity with both 18:0-ACP and 16:0-ACP; when associated with T-207; F-226; T-232 and A-233." evidence="4">
    <original>S</original>
    <variation>N</variation>
    <location>
        <position position="231"/>
    </location>
</feature>
<feature type="mutagenesis site" description="Catalytic activity converted to a delta(9)-18:0-ACP desaturase; when associated with T-207; F-226; N-231 and A-233. Gain of a delta(9) desaturase activity with both 18:0-ACP and 16:0-ACP; when associated with T-207; F-226; N-231 and A-233." evidence="4">
    <original>L</original>
    <variation>T</variation>
    <location>
        <position position="232"/>
    </location>
</feature>
<feature type="mutagenesis site" description="Catalytic activity converted to a delta(9)-18:0-ACP desaturase; when associated with T-207; F-226; N-231 and T-232. Gain of a delta(9) desaturase activity with both 18:0-ACP and 16:0-ACP; when associated with T-207; F-226; N-231 and T-232." evidence="4">
    <original>G</original>
    <variation>A</variation>
    <location>
        <position position="233"/>
    </location>
</feature>
<feature type="helix" evidence="8">
    <location>
        <begin position="62"/>
        <end position="68"/>
    </location>
</feature>
<feature type="helix" evidence="8">
    <location>
        <begin position="70"/>
        <end position="76"/>
    </location>
</feature>
<feature type="helix" evidence="8">
    <location>
        <begin position="78"/>
        <end position="80"/>
    </location>
</feature>
<feature type="helix" evidence="8">
    <location>
        <begin position="90"/>
        <end position="93"/>
    </location>
</feature>
<feature type="helix" evidence="8">
    <location>
        <begin position="102"/>
        <end position="114"/>
    </location>
</feature>
<feature type="helix" evidence="8">
    <location>
        <begin position="118"/>
        <end position="132"/>
    </location>
</feature>
<feature type="helix" evidence="8">
    <location>
        <begin position="135"/>
        <end position="141"/>
    </location>
</feature>
<feature type="strand" evidence="8">
    <location>
        <begin position="146"/>
        <end position="149"/>
    </location>
</feature>
<feature type="strand" evidence="8">
    <location>
        <begin position="152"/>
        <end position="155"/>
    </location>
</feature>
<feature type="helix" evidence="8">
    <location>
        <begin position="157"/>
        <end position="183"/>
    </location>
</feature>
<feature type="helix" evidence="8">
    <location>
        <begin position="188"/>
        <end position="201"/>
    </location>
</feature>
<feature type="helix" evidence="8">
    <location>
        <begin position="211"/>
        <end position="238"/>
    </location>
</feature>
<feature type="helix" evidence="8">
    <location>
        <begin position="242"/>
        <end position="272"/>
    </location>
</feature>
<feature type="helix" evidence="8">
    <location>
        <begin position="274"/>
        <end position="286"/>
    </location>
</feature>
<feature type="helix" evidence="8">
    <location>
        <begin position="304"/>
        <end position="314"/>
    </location>
</feature>
<feature type="helix" evidence="8">
    <location>
        <begin position="320"/>
        <end position="333"/>
    </location>
</feature>
<feature type="helix" evidence="8">
    <location>
        <begin position="336"/>
        <end position="338"/>
    </location>
</feature>
<feature type="helix" evidence="8">
    <location>
        <begin position="344"/>
        <end position="354"/>
    </location>
</feature>
<feature type="helix" evidence="8">
    <location>
        <begin position="356"/>
        <end position="361"/>
    </location>
</feature>
<feature type="helix" evidence="8">
    <location>
        <begin position="364"/>
        <end position="372"/>
    </location>
</feature>
<feature type="helix" evidence="8">
    <location>
        <begin position="377"/>
        <end position="382"/>
    </location>
</feature>